<comment type="function">
    <text>Destroys radicals which are normally produced within the cells and which are toxic to biological systems.</text>
</comment>
<comment type="catalytic activity">
    <reaction>
        <text>2 superoxide + 2 H(+) = H2O2 + O2</text>
        <dbReference type="Rhea" id="RHEA:20696"/>
        <dbReference type="ChEBI" id="CHEBI:15378"/>
        <dbReference type="ChEBI" id="CHEBI:15379"/>
        <dbReference type="ChEBI" id="CHEBI:16240"/>
        <dbReference type="ChEBI" id="CHEBI:18421"/>
        <dbReference type="EC" id="1.15.1.1"/>
    </reaction>
</comment>
<comment type="cofactor">
    <cofactor evidence="1">
        <name>Cu cation</name>
        <dbReference type="ChEBI" id="CHEBI:23378"/>
    </cofactor>
    <text evidence="1">Binds 1 copper ion per subunit.</text>
</comment>
<comment type="cofactor">
    <cofactor evidence="1">
        <name>Zn(2+)</name>
        <dbReference type="ChEBI" id="CHEBI:29105"/>
    </cofactor>
    <text evidence="1">Binds 1 zinc ion per subunit.</text>
</comment>
<comment type="subunit">
    <text evidence="2 5">Homodimer; non-disulfide-linked (By similarity). Heterodimer with SOD1. The heterodimer CCS:SOD1 interacts with SLC31A1; this heterotrimer is Cu(1+)-mediated and its maintenance is regulated through SOD1 activation (By similarity).</text>
</comment>
<comment type="subcellular location">
    <subcellularLocation>
        <location>Cytoplasm</location>
    </subcellularLocation>
    <subcellularLocation>
        <location evidence="1">Nucleus</location>
    </subcellularLocation>
</comment>
<comment type="PTM">
    <text evidence="1">Palmitoylation helps nuclear targeting and decreases catalytic activity.</text>
</comment>
<comment type="PTM">
    <text evidence="2">Succinylation, adjacent to copper catalytic site, probably inhibits activity. Desuccinylation by SIRT5 enhances activity.</text>
</comment>
<comment type="similarity">
    <text evidence="7">Belongs to the Cu-Zn superoxide dismutase family.</text>
</comment>
<organism>
    <name type="scientific">Oryctolagus cuniculus</name>
    <name type="common">Rabbit</name>
    <dbReference type="NCBI Taxonomy" id="9986"/>
    <lineage>
        <taxon>Eukaryota</taxon>
        <taxon>Metazoa</taxon>
        <taxon>Chordata</taxon>
        <taxon>Craniata</taxon>
        <taxon>Vertebrata</taxon>
        <taxon>Euteleostomi</taxon>
        <taxon>Mammalia</taxon>
        <taxon>Eutheria</taxon>
        <taxon>Euarchontoglires</taxon>
        <taxon>Glires</taxon>
        <taxon>Lagomorpha</taxon>
        <taxon>Leporidae</taxon>
        <taxon>Oryctolagus</taxon>
    </lineage>
</organism>
<keyword id="KW-0007">Acetylation</keyword>
<keyword id="KW-0049">Antioxidant</keyword>
<keyword id="KW-0186">Copper</keyword>
<keyword id="KW-0963">Cytoplasm</keyword>
<keyword id="KW-0903">Direct protein sequencing</keyword>
<keyword id="KW-1015">Disulfide bond</keyword>
<keyword id="KW-0449">Lipoprotein</keyword>
<keyword id="KW-0479">Metal-binding</keyword>
<keyword id="KW-0539">Nucleus</keyword>
<keyword id="KW-0560">Oxidoreductase</keyword>
<keyword id="KW-0564">Palmitate</keyword>
<keyword id="KW-0597">Phosphoprotein</keyword>
<keyword id="KW-1185">Reference proteome</keyword>
<keyword id="KW-0862">Zinc</keyword>
<name>SODC_RABIT</name>
<gene>
    <name evidence="2" type="primary">SOD1</name>
</gene>
<dbReference type="EC" id="1.15.1.1" evidence="2"/>
<dbReference type="EMBL" id="Z22644">
    <property type="protein sequence ID" value="CAA80357.1"/>
    <property type="molecule type" value="mRNA"/>
</dbReference>
<dbReference type="PIR" id="S33162">
    <property type="entry name" value="S33162"/>
</dbReference>
<dbReference type="RefSeq" id="NP_001076096.1">
    <property type="nucleotide sequence ID" value="NM_001082627.1"/>
</dbReference>
<dbReference type="SMR" id="P09212"/>
<dbReference type="FunCoup" id="P09212">
    <property type="interactions" value="1154"/>
</dbReference>
<dbReference type="STRING" id="9986.ENSOCUP00000017459"/>
<dbReference type="PaxDb" id="9986-ENSOCUP00000017459"/>
<dbReference type="GeneID" id="100009313"/>
<dbReference type="KEGG" id="ocu:100009313"/>
<dbReference type="eggNOG" id="KOG0441">
    <property type="taxonomic scope" value="Eukaryota"/>
</dbReference>
<dbReference type="InParanoid" id="P09212"/>
<dbReference type="OrthoDB" id="2015551at2759"/>
<dbReference type="Proteomes" id="UP000001811">
    <property type="component" value="Unplaced"/>
</dbReference>
<dbReference type="GO" id="GO:0005737">
    <property type="term" value="C:cytoplasm"/>
    <property type="evidence" value="ECO:0000250"/>
    <property type="project" value="UniProtKB"/>
</dbReference>
<dbReference type="GO" id="GO:0031410">
    <property type="term" value="C:cytoplasmic vesicle"/>
    <property type="evidence" value="ECO:0000250"/>
    <property type="project" value="UniProtKB"/>
</dbReference>
<dbReference type="GO" id="GO:0005829">
    <property type="term" value="C:cytosol"/>
    <property type="evidence" value="ECO:0000250"/>
    <property type="project" value="UniProtKB"/>
</dbReference>
<dbReference type="GO" id="GO:0032839">
    <property type="term" value="C:dendrite cytoplasm"/>
    <property type="evidence" value="ECO:0000250"/>
    <property type="project" value="UniProtKB"/>
</dbReference>
<dbReference type="GO" id="GO:0005739">
    <property type="term" value="C:mitochondrion"/>
    <property type="evidence" value="ECO:0000250"/>
    <property type="project" value="UniProtKB"/>
</dbReference>
<dbReference type="GO" id="GO:0043025">
    <property type="term" value="C:neuronal cell body"/>
    <property type="evidence" value="ECO:0000250"/>
    <property type="project" value="UniProtKB"/>
</dbReference>
<dbReference type="GO" id="GO:0005634">
    <property type="term" value="C:nucleus"/>
    <property type="evidence" value="ECO:0000250"/>
    <property type="project" value="UniProtKB"/>
</dbReference>
<dbReference type="GO" id="GO:0032991">
    <property type="term" value="C:protein-containing complex"/>
    <property type="evidence" value="ECO:0000250"/>
    <property type="project" value="UniProtKB"/>
</dbReference>
<dbReference type="GO" id="GO:0005507">
    <property type="term" value="F:copper ion binding"/>
    <property type="evidence" value="ECO:0000250"/>
    <property type="project" value="UniProtKB"/>
</dbReference>
<dbReference type="GO" id="GO:0030346">
    <property type="term" value="F:protein phosphatase 2B binding"/>
    <property type="evidence" value="ECO:0000250"/>
    <property type="project" value="UniProtKB"/>
</dbReference>
<dbReference type="GO" id="GO:0051087">
    <property type="term" value="F:protein-folding chaperone binding"/>
    <property type="evidence" value="ECO:0000250"/>
    <property type="project" value="UniProtKB"/>
</dbReference>
<dbReference type="GO" id="GO:0004784">
    <property type="term" value="F:superoxide dismutase activity"/>
    <property type="evidence" value="ECO:0000250"/>
    <property type="project" value="UniProtKB"/>
</dbReference>
<dbReference type="GO" id="GO:0008270">
    <property type="term" value="F:zinc ion binding"/>
    <property type="evidence" value="ECO:0000250"/>
    <property type="project" value="UniProtKB"/>
</dbReference>
<dbReference type="GO" id="GO:0060088">
    <property type="term" value="P:auditory receptor cell stereocilium organization"/>
    <property type="evidence" value="ECO:0000250"/>
    <property type="project" value="UniProtKB"/>
</dbReference>
<dbReference type="GO" id="GO:0007566">
    <property type="term" value="P:embryo implantation"/>
    <property type="evidence" value="ECO:0000250"/>
    <property type="project" value="UniProtKB"/>
</dbReference>
<dbReference type="GO" id="GO:0006749">
    <property type="term" value="P:glutathione metabolic process"/>
    <property type="evidence" value="ECO:0000250"/>
    <property type="project" value="UniProtKB"/>
</dbReference>
<dbReference type="GO" id="GO:0060047">
    <property type="term" value="P:heart contraction"/>
    <property type="evidence" value="ECO:0000250"/>
    <property type="project" value="UniProtKB"/>
</dbReference>
<dbReference type="GO" id="GO:0050665">
    <property type="term" value="P:hydrogen peroxide biosynthetic process"/>
    <property type="evidence" value="ECO:0000250"/>
    <property type="project" value="UniProtKB"/>
</dbReference>
<dbReference type="GO" id="GO:0006879">
    <property type="term" value="P:intracellular iron ion homeostasis"/>
    <property type="evidence" value="ECO:0000250"/>
    <property type="project" value="UniProtKB"/>
</dbReference>
<dbReference type="GO" id="GO:0007626">
    <property type="term" value="P:locomotory behavior"/>
    <property type="evidence" value="ECO:0000250"/>
    <property type="project" value="UniProtKB"/>
</dbReference>
<dbReference type="GO" id="GO:0046716">
    <property type="term" value="P:muscle cell cellular homeostasis"/>
    <property type="evidence" value="ECO:0000250"/>
    <property type="project" value="UniProtKB"/>
</dbReference>
<dbReference type="GO" id="GO:0002262">
    <property type="term" value="P:myeloid cell homeostasis"/>
    <property type="evidence" value="ECO:0000250"/>
    <property type="project" value="UniProtKB"/>
</dbReference>
<dbReference type="GO" id="GO:0043524">
    <property type="term" value="P:negative regulation of neuron apoptotic process"/>
    <property type="evidence" value="ECO:0000250"/>
    <property type="project" value="UniProtKB"/>
</dbReference>
<dbReference type="GO" id="GO:0060052">
    <property type="term" value="P:neurofilament cytoskeleton organization"/>
    <property type="evidence" value="ECO:0000250"/>
    <property type="project" value="UniProtKB"/>
</dbReference>
<dbReference type="GO" id="GO:0001541">
    <property type="term" value="P:ovarian follicle development"/>
    <property type="evidence" value="ECO:0000250"/>
    <property type="project" value="UniProtKB"/>
</dbReference>
<dbReference type="GO" id="GO:0032287">
    <property type="term" value="P:peripheral nervous system myelin maintenance"/>
    <property type="evidence" value="ECO:0000250"/>
    <property type="project" value="UniProtKB"/>
</dbReference>
<dbReference type="GO" id="GO:0001819">
    <property type="term" value="P:positive regulation of cytokine production"/>
    <property type="evidence" value="ECO:0000250"/>
    <property type="project" value="UniProtKB"/>
</dbReference>
<dbReference type="GO" id="GO:0043410">
    <property type="term" value="P:positive regulation of MAPK cascade"/>
    <property type="evidence" value="ECO:0000250"/>
    <property type="project" value="UniProtKB"/>
</dbReference>
<dbReference type="GO" id="GO:0072593">
    <property type="term" value="P:reactive oxygen species metabolic process"/>
    <property type="evidence" value="ECO:0000250"/>
    <property type="project" value="UniProtKB"/>
</dbReference>
<dbReference type="GO" id="GO:0008217">
    <property type="term" value="P:regulation of blood pressure"/>
    <property type="evidence" value="ECO:0000250"/>
    <property type="project" value="UniProtKB"/>
</dbReference>
<dbReference type="GO" id="GO:0051881">
    <property type="term" value="P:regulation of mitochondrial membrane potential"/>
    <property type="evidence" value="ECO:0000250"/>
    <property type="project" value="UniProtKB"/>
</dbReference>
<dbReference type="GO" id="GO:0040014">
    <property type="term" value="P:regulation of multicellular organism growth"/>
    <property type="evidence" value="ECO:0000250"/>
    <property type="project" value="UniProtKB"/>
</dbReference>
<dbReference type="GO" id="GO:0060087">
    <property type="term" value="P:relaxation of vascular associated smooth muscle"/>
    <property type="evidence" value="ECO:0000250"/>
    <property type="project" value="UniProtKB"/>
</dbReference>
<dbReference type="GO" id="GO:0019430">
    <property type="term" value="P:removal of superoxide radicals"/>
    <property type="evidence" value="ECO:0000250"/>
    <property type="project" value="UniProtKB"/>
</dbReference>
<dbReference type="GO" id="GO:0048678">
    <property type="term" value="P:response to axon injury"/>
    <property type="evidence" value="ECO:0000250"/>
    <property type="project" value="UniProtKB"/>
</dbReference>
<dbReference type="GO" id="GO:0045471">
    <property type="term" value="P:response to ethanol"/>
    <property type="evidence" value="ECO:0000250"/>
    <property type="project" value="UniProtKB"/>
</dbReference>
<dbReference type="GO" id="GO:0009408">
    <property type="term" value="P:response to heat"/>
    <property type="evidence" value="ECO:0000250"/>
    <property type="project" value="UniProtKB"/>
</dbReference>
<dbReference type="GO" id="GO:0042542">
    <property type="term" value="P:response to hydrogen peroxide"/>
    <property type="evidence" value="ECO:0000250"/>
    <property type="project" value="UniProtKB"/>
</dbReference>
<dbReference type="GO" id="GO:0000303">
    <property type="term" value="P:response to superoxide"/>
    <property type="evidence" value="ECO:0000250"/>
    <property type="project" value="UniProtKB"/>
</dbReference>
<dbReference type="GO" id="GO:0001895">
    <property type="term" value="P:retina homeostasis"/>
    <property type="evidence" value="ECO:0000250"/>
    <property type="project" value="UniProtKB"/>
</dbReference>
<dbReference type="GO" id="GO:0007605">
    <property type="term" value="P:sensory perception of sound"/>
    <property type="evidence" value="ECO:0000250"/>
    <property type="project" value="UniProtKB"/>
</dbReference>
<dbReference type="GO" id="GO:0007283">
    <property type="term" value="P:spermatogenesis"/>
    <property type="evidence" value="ECO:0000250"/>
    <property type="project" value="UniProtKB"/>
</dbReference>
<dbReference type="GO" id="GO:0006801">
    <property type="term" value="P:superoxide metabolic process"/>
    <property type="evidence" value="ECO:0000250"/>
    <property type="project" value="UniProtKB"/>
</dbReference>
<dbReference type="GO" id="GO:0019226">
    <property type="term" value="P:transmission of nerve impulse"/>
    <property type="evidence" value="ECO:0000250"/>
    <property type="project" value="UniProtKB"/>
</dbReference>
<dbReference type="CDD" id="cd00305">
    <property type="entry name" value="Cu-Zn_Superoxide_Dismutase"/>
    <property type="match status" value="1"/>
</dbReference>
<dbReference type="FunFam" id="2.60.40.200:FF:000001">
    <property type="entry name" value="Superoxide dismutase [Cu-Zn]"/>
    <property type="match status" value="1"/>
</dbReference>
<dbReference type="Gene3D" id="2.60.40.200">
    <property type="entry name" value="Superoxide dismutase, copper/zinc binding domain"/>
    <property type="match status" value="1"/>
</dbReference>
<dbReference type="InterPro" id="IPR036423">
    <property type="entry name" value="SOD-like_Cu/Zn_dom_sf"/>
</dbReference>
<dbReference type="InterPro" id="IPR024134">
    <property type="entry name" value="SOD_Cu/Zn_/chaperone"/>
</dbReference>
<dbReference type="InterPro" id="IPR018152">
    <property type="entry name" value="SOD_Cu/Zn_BS"/>
</dbReference>
<dbReference type="InterPro" id="IPR001424">
    <property type="entry name" value="SOD_Cu_Zn_dom"/>
</dbReference>
<dbReference type="PANTHER" id="PTHR10003">
    <property type="entry name" value="SUPEROXIDE DISMUTASE CU-ZN -RELATED"/>
    <property type="match status" value="1"/>
</dbReference>
<dbReference type="Pfam" id="PF00080">
    <property type="entry name" value="Sod_Cu"/>
    <property type="match status" value="1"/>
</dbReference>
<dbReference type="PRINTS" id="PR00068">
    <property type="entry name" value="CUZNDISMTASE"/>
</dbReference>
<dbReference type="SUPFAM" id="SSF49329">
    <property type="entry name" value="Cu,Zn superoxide dismutase-like"/>
    <property type="match status" value="1"/>
</dbReference>
<dbReference type="PROSITE" id="PS00332">
    <property type="entry name" value="SOD_CU_ZN_2"/>
    <property type="match status" value="1"/>
</dbReference>
<proteinExistence type="evidence at protein level"/>
<protein>
    <recommendedName>
        <fullName evidence="2">Superoxide dismutase [Cu-Zn]</fullName>
        <ecNumber evidence="2">1.15.1.1</ecNumber>
    </recommendedName>
</protein>
<sequence>MATKAVCVLKGDGPVEATIHFEQKGTGPVVVKGRITGLTEGLHEFHVHQFGDNRQGCTSAGPHFNPLSKKHGGPKDEERHVGDLGNVTAGSNGVADVLIEDSVISLSGDMSVIGRTLVVHEKEDDLGKGGNDESTKTGNAGSRLACGVIGISP</sequence>
<feature type="initiator methionine" description="Removed" evidence="3 6">
    <location>
        <position position="1"/>
    </location>
</feature>
<feature type="chain" id="PRO_0000164066" description="Superoxide dismutase [Cu-Zn]">
    <location>
        <begin position="2"/>
        <end position="153"/>
    </location>
</feature>
<feature type="binding site" evidence="1">
    <location>
        <position position="46"/>
    </location>
    <ligand>
        <name>Cu cation</name>
        <dbReference type="ChEBI" id="CHEBI:23378"/>
        <note>catalytic</note>
    </ligand>
</feature>
<feature type="binding site" evidence="1">
    <location>
        <position position="48"/>
    </location>
    <ligand>
        <name>Cu cation</name>
        <dbReference type="ChEBI" id="CHEBI:23378"/>
        <note>catalytic</note>
    </ligand>
</feature>
<feature type="binding site" evidence="1">
    <location>
        <position position="63"/>
    </location>
    <ligand>
        <name>Cu cation</name>
        <dbReference type="ChEBI" id="CHEBI:23378"/>
        <note>catalytic</note>
    </ligand>
</feature>
<feature type="binding site" evidence="1">
    <location>
        <position position="63"/>
    </location>
    <ligand>
        <name>Zn(2+)</name>
        <dbReference type="ChEBI" id="CHEBI:29105"/>
        <note>structural</note>
    </ligand>
</feature>
<feature type="binding site" evidence="1">
    <location>
        <position position="71"/>
    </location>
    <ligand>
        <name>Zn(2+)</name>
        <dbReference type="ChEBI" id="CHEBI:29105"/>
        <note>structural</note>
    </ligand>
</feature>
<feature type="binding site" evidence="1">
    <location>
        <position position="80"/>
    </location>
    <ligand>
        <name>Zn(2+)</name>
        <dbReference type="ChEBI" id="CHEBI:29105"/>
        <note>structural</note>
    </ligand>
</feature>
<feature type="binding site" evidence="1">
    <location>
        <position position="83"/>
    </location>
    <ligand>
        <name>Zn(2+)</name>
        <dbReference type="ChEBI" id="CHEBI:29105"/>
        <note>structural</note>
    </ligand>
</feature>
<feature type="binding site" evidence="1">
    <location>
        <position position="120"/>
    </location>
    <ligand>
        <name>Cu cation</name>
        <dbReference type="ChEBI" id="CHEBI:23378"/>
        <note>catalytic</note>
    </ligand>
</feature>
<feature type="modified residue" description="N-acetylalanine" evidence="3">
    <location>
        <position position="2"/>
    </location>
</feature>
<feature type="modified residue" description="N6-succinyllysine" evidence="5">
    <location>
        <position position="4"/>
    </location>
</feature>
<feature type="modified residue" description="N6-succinyllysine" evidence="5">
    <location>
        <position position="10"/>
    </location>
</feature>
<feature type="modified residue" description="Phosphoserine" evidence="2">
    <location>
        <position position="102"/>
    </location>
</feature>
<feature type="modified residue" description="Phosphoserine" evidence="4">
    <location>
        <position position="105"/>
    </location>
</feature>
<feature type="modified residue" description="Phosphoserine" evidence="5">
    <location>
        <position position="107"/>
    </location>
</feature>
<feature type="modified residue" description="N6-acetyllysine; alternate" evidence="2">
    <location>
        <position position="122"/>
    </location>
</feature>
<feature type="modified residue" description="N6-succinyllysine; alternate" evidence="2">
    <location>
        <position position="122"/>
    </location>
</feature>
<feature type="modified residue" description="N6-acetyllysine; alternate" evidence="5">
    <location>
        <position position="136"/>
    </location>
</feature>
<feature type="modified residue" description="N6-succinyllysine; alternate" evidence="5">
    <location>
        <position position="136"/>
    </location>
</feature>
<feature type="lipid moiety-binding region" description="S-palmitoyl cysteine" evidence="1">
    <location>
        <position position="7"/>
    </location>
</feature>
<feature type="disulfide bond" evidence="1">
    <location>
        <begin position="57"/>
        <end position="146"/>
    </location>
</feature>
<feature type="sequence conflict" description="In Ref. 2; AA sequence." evidence="7" ref="2">
    <original>A</original>
    <variation>G</variation>
    <location>
        <position position="17"/>
    </location>
</feature>
<feature type="sequence conflict" description="In Ref. 2; AA sequence." evidence="7" ref="2">
    <original>E</original>
    <variation>G</variation>
    <location>
        <position position="44"/>
    </location>
</feature>
<feature type="sequence conflict" description="In Ref. 2; AA sequence." evidence="7" ref="2">
    <original>R</original>
    <variation>T</variation>
    <location>
        <position position="54"/>
    </location>
</feature>
<feature type="sequence conflict" description="In Ref. 2; AA sequence." evidence="7" ref="2">
    <original>S</original>
    <variation>A</variation>
    <location>
        <position position="152"/>
    </location>
</feature>
<evidence type="ECO:0000250" key="1"/>
<evidence type="ECO:0000250" key="2">
    <source>
        <dbReference type="UniProtKB" id="P00441"/>
    </source>
</evidence>
<evidence type="ECO:0000250" key="3">
    <source>
        <dbReference type="UniProtKB" id="P00442"/>
    </source>
</evidence>
<evidence type="ECO:0000250" key="4">
    <source>
        <dbReference type="UniProtKB" id="P07632"/>
    </source>
</evidence>
<evidence type="ECO:0000250" key="5">
    <source>
        <dbReference type="UniProtKB" id="P08228"/>
    </source>
</evidence>
<evidence type="ECO:0000269" key="6">
    <source>
    </source>
</evidence>
<evidence type="ECO:0000305" key="7"/>
<reference key="1">
    <citation type="submission" date="1993-04" db="EMBL/GenBank/DDBJ databases">
        <authorList>
            <person name="Jackson R.M."/>
            <person name="Ho Y."/>
        </authorList>
    </citation>
    <scope>NUCLEOTIDE SEQUENCE [MRNA]</scope>
    <source>
        <strain>New Zealand white</strain>
        <tissue>Lung</tissue>
    </source>
</reference>
<reference key="2">
    <citation type="journal article" date="1988" name="Biol. Chem. Hoppe-Seyler">
        <title>The amino-acid sequence of rabbit Cu-Zn superoxide dismutase.</title>
        <authorList>
            <person name="Reinecke K."/>
            <person name="Wolf B."/>
            <person name="Michelson A.M."/>
            <person name="Pugrt K."/>
            <person name="Steffens G.J."/>
            <person name="Flohe L."/>
        </authorList>
    </citation>
    <scope>PROTEIN SEQUENCE OF 2-153</scope>
</reference>
<accession>P09212</accession>